<gene>
    <name type="primary">znuA</name>
    <name type="ordered locus">BruAb2_1059</name>
</gene>
<organism>
    <name type="scientific">Brucella abortus biovar 1 (strain 9-941)</name>
    <dbReference type="NCBI Taxonomy" id="262698"/>
    <lineage>
        <taxon>Bacteria</taxon>
        <taxon>Pseudomonadati</taxon>
        <taxon>Pseudomonadota</taxon>
        <taxon>Alphaproteobacteria</taxon>
        <taxon>Hyphomicrobiales</taxon>
        <taxon>Brucellaceae</taxon>
        <taxon>Brucella/Ochrobactrum group</taxon>
        <taxon>Brucella</taxon>
    </lineage>
</organism>
<accession>Q576K1</accession>
<feature type="signal peptide" evidence="3">
    <location>
        <begin position="1"/>
        <end position="23"/>
    </location>
</feature>
<feature type="chain" id="PRO_0000248944" description="High-affinity zinc uptake system protein ZnuA">
    <location>
        <begin position="24"/>
        <end position="334"/>
    </location>
</feature>
<feature type="region of interest" description="Disordered" evidence="4">
    <location>
        <begin position="120"/>
        <end position="147"/>
    </location>
</feature>
<feature type="binding site" evidence="2">
    <location>
        <position position="60"/>
    </location>
    <ligand>
        <name>Zn(2+)</name>
        <dbReference type="ChEBI" id="CHEBI:29105"/>
    </ligand>
</feature>
<feature type="binding site" evidence="2">
    <location>
        <position position="61"/>
    </location>
    <ligand>
        <name>Zn(2+)</name>
        <dbReference type="ChEBI" id="CHEBI:29105"/>
    </ligand>
</feature>
<feature type="binding site" evidence="2">
    <location>
        <position position="168"/>
    </location>
    <ligand>
        <name>Zn(2+)</name>
        <dbReference type="ChEBI" id="CHEBI:29105"/>
    </ligand>
</feature>
<feature type="binding site" evidence="2">
    <location>
        <position position="232"/>
    </location>
    <ligand>
        <name>Zn(2+)</name>
        <dbReference type="ChEBI" id="CHEBI:29105"/>
    </ligand>
</feature>
<feature type="disulfide bond" evidence="2">
    <location>
        <begin position="277"/>
        <end position="331"/>
    </location>
</feature>
<comment type="function">
    <text evidence="5">Part of the ATP-binding cassette (ABC) transport system ZnuABC involved in zinc import (PubMed:15472468). Binds zinc with high affinity and specificity and delivers it to the membrane permease for translocation into the cytoplasm (PubMed:15472468). Required for survival and normal growth under low Zn (2+) concentrations (PubMed:15472468). Also required for virulence and intracellular growth in macrophages (PubMed:15472468).</text>
</comment>
<comment type="subcellular location">
    <subcellularLocation>
        <location evidence="1">Periplasm</location>
    </subcellularLocation>
</comment>
<comment type="similarity">
    <text evidence="6">Belongs to the bacterial solute-binding protein 9 family.</text>
</comment>
<keyword id="KW-1015">Disulfide bond</keyword>
<keyword id="KW-0406">Ion transport</keyword>
<keyword id="KW-0479">Metal-binding</keyword>
<keyword id="KW-0574">Periplasm</keyword>
<keyword id="KW-0732">Signal</keyword>
<keyword id="KW-0813">Transport</keyword>
<keyword id="KW-0843">Virulence</keyword>
<keyword id="KW-0862">Zinc</keyword>
<keyword id="KW-0864">Zinc transport</keyword>
<protein>
    <recommendedName>
        <fullName>High-affinity zinc uptake system protein ZnuA</fullName>
    </recommendedName>
</protein>
<proteinExistence type="inferred from homology"/>
<sequence length="334" mass="36046">MKNLHSLFLASAFLAGFCGSSLAGEREGVVVSIKPLHSIVSAVMQGVGKPKLIVQGAGSEHVYSLKPSDAEAIEHAKVIFWAGPSMETFLDKPIDTLGEGAKVVALGDAKGLTKLKFREGGPFEAHDHGHGGSHEEEHDAHGSGDHDHAAEVAEEGHEHHHHGEYDLHFWLDPQNGKILAADIAKTLGESDPEHAAQYEKNAKAYGEKLDALTREVAAELKPVKDKPFIVFHDAYQYFENRFGMKAAGSITVSPEKAPGAARIQQIHDKIKSLGATCVFSEPQFEPKLVKTVVDGTKARTGVLDPLGAELKDGPDLYPQLIRNLANSLKDCLPK</sequence>
<evidence type="ECO:0000250" key="1">
    <source>
        <dbReference type="UniProtKB" id="A1B9L0"/>
    </source>
</evidence>
<evidence type="ECO:0000250" key="2">
    <source>
        <dbReference type="UniProtKB" id="P39172"/>
    </source>
</evidence>
<evidence type="ECO:0000255" key="3"/>
<evidence type="ECO:0000256" key="4">
    <source>
        <dbReference type="SAM" id="MobiDB-lite"/>
    </source>
</evidence>
<evidence type="ECO:0000269" key="5">
    <source>
    </source>
</evidence>
<evidence type="ECO:0000305" key="6"/>
<name>ZNUA_BRUAB</name>
<reference key="1">
    <citation type="journal article" date="2005" name="J. Bacteriol.">
        <title>Completion of the genome sequence of Brucella abortus and comparison to the highly similar genomes of Brucella melitensis and Brucella suis.</title>
        <authorList>
            <person name="Halling S.M."/>
            <person name="Peterson-Burch B.D."/>
            <person name="Bricker B.J."/>
            <person name="Zuerner R.L."/>
            <person name="Qing Z."/>
            <person name="Li L.-L."/>
            <person name="Kapur V."/>
            <person name="Alt D.P."/>
            <person name="Olsen S.C."/>
        </authorList>
    </citation>
    <scope>NUCLEOTIDE SEQUENCE [LARGE SCALE GENOMIC DNA]</scope>
    <source>
        <strain>9-941</strain>
    </source>
</reference>
<reference key="2">
    <citation type="journal article" date="2004" name="J. Vet. Med. Sci.">
        <title>Zinc uptake system (znuA locus) of Brucella abortus is essential for intracellular survival and virulence in mice.</title>
        <authorList>
            <person name="Kim S."/>
            <person name="Watanabe K."/>
            <person name="Shirahata T."/>
            <person name="Watarai M."/>
        </authorList>
    </citation>
    <scope>FUNCTION</scope>
    <source>
        <strain>544 / Biovar 1</strain>
    </source>
</reference>
<dbReference type="EMBL" id="AE017224">
    <property type="protein sequence ID" value="AAX76433.1"/>
    <property type="molecule type" value="Genomic_DNA"/>
</dbReference>
<dbReference type="RefSeq" id="WP_002966661.1">
    <property type="nucleotide sequence ID" value="NC_006933.1"/>
</dbReference>
<dbReference type="SMR" id="Q576K1"/>
<dbReference type="EnsemblBacteria" id="AAX76433">
    <property type="protein sequence ID" value="AAX76433"/>
    <property type="gene ID" value="BruAb2_1059"/>
</dbReference>
<dbReference type="GeneID" id="93016086"/>
<dbReference type="KEGG" id="bmb:BruAb2_1059"/>
<dbReference type="HOGENOM" id="CLU_016838_1_2_5"/>
<dbReference type="PRO" id="PR:Q576K1"/>
<dbReference type="Proteomes" id="UP000000540">
    <property type="component" value="Chromosome II"/>
</dbReference>
<dbReference type="GO" id="GO:0042597">
    <property type="term" value="C:periplasmic space"/>
    <property type="evidence" value="ECO:0007669"/>
    <property type="project" value="UniProtKB-SubCell"/>
</dbReference>
<dbReference type="GO" id="GO:0046872">
    <property type="term" value="F:metal ion binding"/>
    <property type="evidence" value="ECO:0007669"/>
    <property type="project" value="UniProtKB-KW"/>
</dbReference>
<dbReference type="GO" id="GO:0006829">
    <property type="term" value="P:zinc ion transport"/>
    <property type="evidence" value="ECO:0007669"/>
    <property type="project" value="UniProtKB-KW"/>
</dbReference>
<dbReference type="CDD" id="cd01019">
    <property type="entry name" value="ZnuA"/>
    <property type="match status" value="1"/>
</dbReference>
<dbReference type="Gene3D" id="3.40.50.1980">
    <property type="entry name" value="Nitrogenase molybdenum iron protein domain"/>
    <property type="match status" value="2"/>
</dbReference>
<dbReference type="InterPro" id="IPR050492">
    <property type="entry name" value="Bact_metal-bind_prot9"/>
</dbReference>
<dbReference type="InterPro" id="IPR035520">
    <property type="entry name" value="ZnuA"/>
</dbReference>
<dbReference type="InterPro" id="IPR006127">
    <property type="entry name" value="ZnuA-like"/>
</dbReference>
<dbReference type="NCBIfam" id="NF007091">
    <property type="entry name" value="PRK09545.1"/>
    <property type="match status" value="1"/>
</dbReference>
<dbReference type="PANTHER" id="PTHR42953:SF3">
    <property type="entry name" value="HIGH-AFFINITY ZINC UPTAKE SYSTEM PROTEIN ZNUA"/>
    <property type="match status" value="1"/>
</dbReference>
<dbReference type="PANTHER" id="PTHR42953">
    <property type="entry name" value="HIGH-AFFINITY ZINC UPTAKE SYSTEM PROTEIN ZNUA-RELATED"/>
    <property type="match status" value="1"/>
</dbReference>
<dbReference type="Pfam" id="PF01297">
    <property type="entry name" value="ZnuA"/>
    <property type="match status" value="1"/>
</dbReference>
<dbReference type="SUPFAM" id="SSF53807">
    <property type="entry name" value="Helical backbone' metal receptor"/>
    <property type="match status" value="1"/>
</dbReference>